<evidence type="ECO:0000250" key="1"/>
<evidence type="ECO:0000255" key="2"/>
<evidence type="ECO:0000305" key="3"/>
<organism>
    <name type="scientific">Tomato yellow leaf curl Sardinia virus (isolate Spain-1)</name>
    <name type="common">TYLCSV</name>
    <dbReference type="NCBI Taxonomy" id="37139"/>
    <lineage>
        <taxon>Viruses</taxon>
        <taxon>Monodnaviria</taxon>
        <taxon>Shotokuvirae</taxon>
        <taxon>Cressdnaviricota</taxon>
        <taxon>Repensiviricetes</taxon>
        <taxon>Geplafuvirales</taxon>
        <taxon>Geminiviridae</taxon>
        <taxon>Begomovirus</taxon>
        <taxon>Tomato yellow leaf curl virus</taxon>
    </lineage>
</organism>
<feature type="chain" id="PRO_0000222198" description="Capsid protein">
    <location>
        <begin position="1"/>
        <end position="257"/>
    </location>
</feature>
<feature type="zinc finger region" evidence="2">
    <location>
        <begin position="68"/>
        <end position="85"/>
    </location>
</feature>
<feature type="short sequence motif" description="Bipartite nuclear localization signal" evidence="2">
    <location>
        <begin position="3"/>
        <end position="20"/>
    </location>
</feature>
<feature type="short sequence motif" description="Nuclear localization signal" evidence="2">
    <location>
        <begin position="40"/>
        <end position="54"/>
    </location>
</feature>
<feature type="short sequence motif" description="Nuclear export signal" evidence="2">
    <location>
        <begin position="101"/>
        <end position="122"/>
    </location>
</feature>
<feature type="short sequence motif" description="Bipartite nuclear localization signal" evidence="2">
    <location>
        <begin position="201"/>
        <end position="248"/>
    </location>
</feature>
<protein>
    <recommendedName>
        <fullName>Capsid protein</fullName>
    </recommendedName>
    <alternativeName>
        <fullName>Coat protein</fullName>
        <shortName>CP</shortName>
    </alternativeName>
</protein>
<dbReference type="EMBL" id="Z25751">
    <property type="protein sequence ID" value="CAA81025.1"/>
    <property type="molecule type" value="Genomic_DNA"/>
</dbReference>
<dbReference type="PIR" id="S39210">
    <property type="entry name" value="S39210"/>
</dbReference>
<dbReference type="SMR" id="P38608"/>
<dbReference type="Proteomes" id="UP000008265">
    <property type="component" value="Genome"/>
</dbReference>
<dbReference type="GO" id="GO:0043657">
    <property type="term" value="C:host cell"/>
    <property type="evidence" value="ECO:0007669"/>
    <property type="project" value="GOC"/>
</dbReference>
<dbReference type="GO" id="GO:0042025">
    <property type="term" value="C:host cell nucleus"/>
    <property type="evidence" value="ECO:0007669"/>
    <property type="project" value="UniProtKB-SubCell"/>
</dbReference>
<dbReference type="GO" id="GO:0039615">
    <property type="term" value="C:T=1 icosahedral viral capsid"/>
    <property type="evidence" value="ECO:0007669"/>
    <property type="project" value="UniProtKB-KW"/>
</dbReference>
<dbReference type="GO" id="GO:0003677">
    <property type="term" value="F:DNA binding"/>
    <property type="evidence" value="ECO:0007669"/>
    <property type="project" value="UniProtKB-KW"/>
</dbReference>
<dbReference type="GO" id="GO:0005198">
    <property type="term" value="F:structural molecule activity"/>
    <property type="evidence" value="ECO:0007669"/>
    <property type="project" value="InterPro"/>
</dbReference>
<dbReference type="GO" id="GO:0008270">
    <property type="term" value="F:zinc ion binding"/>
    <property type="evidence" value="ECO:0007669"/>
    <property type="project" value="UniProtKB-KW"/>
</dbReference>
<dbReference type="GO" id="GO:0046718">
    <property type="term" value="P:symbiont entry into host cell"/>
    <property type="evidence" value="ECO:0007669"/>
    <property type="project" value="UniProtKB-KW"/>
</dbReference>
<dbReference type="GO" id="GO:0075732">
    <property type="term" value="P:viral penetration into host nucleus"/>
    <property type="evidence" value="ECO:0007669"/>
    <property type="project" value="UniProtKB-KW"/>
</dbReference>
<dbReference type="Gene3D" id="2.60.120.20">
    <property type="match status" value="1"/>
</dbReference>
<dbReference type="InterPro" id="IPR000650">
    <property type="entry name" value="Gem_coat_AR1"/>
</dbReference>
<dbReference type="InterPro" id="IPR000263">
    <property type="entry name" value="GV_A/BR1_coat"/>
</dbReference>
<dbReference type="InterPro" id="IPR029053">
    <property type="entry name" value="Viral_coat"/>
</dbReference>
<dbReference type="Pfam" id="PF00844">
    <property type="entry name" value="Gemini_coat"/>
    <property type="match status" value="1"/>
</dbReference>
<dbReference type="PRINTS" id="PR00224">
    <property type="entry name" value="GEMCOATAR1"/>
</dbReference>
<dbReference type="PRINTS" id="PR00223">
    <property type="entry name" value="GEMCOATARBR1"/>
</dbReference>
<name>CAPSD_TYCS1</name>
<keyword id="KW-0167">Capsid protein</keyword>
<keyword id="KW-0238">DNA-binding</keyword>
<keyword id="KW-1048">Host nucleus</keyword>
<keyword id="KW-0479">Metal-binding</keyword>
<keyword id="KW-1140">T=1 icosahedral capsid protein</keyword>
<keyword id="KW-1163">Viral penetration into host nucleus</keyword>
<keyword id="KW-0946">Virion</keyword>
<keyword id="KW-1160">Virus entry into host cell</keyword>
<keyword id="KW-0862">Zinc</keyword>
<keyword id="KW-0863">Zinc-finger</keyword>
<reference key="1">
    <citation type="journal article" date="1994" name="Arch. Virol.">
        <title>High similarity among the tomato yellow leaf curl virus isolates from the west Mediterranean basin: the nucleotide sequence of an infectious clone from Spain.</title>
        <authorList>
            <person name="Noris E."/>
            <person name="Hidalgo E."/>
            <person name="Accotto G.P."/>
            <person name="Moriones E."/>
        </authorList>
    </citation>
    <scope>NUCLEOTIDE SEQUENCE [GENOMIC DNA]</scope>
</reference>
<organismHost>
    <name type="scientific">Cynanchum acutum</name>
    <dbReference type="NCBI Taxonomy" id="185024"/>
</organismHost>
<organismHost>
    <name type="scientific">Solanum lycopersicum</name>
    <name type="common">Tomato</name>
    <name type="synonym">Lycopersicon esculentum</name>
    <dbReference type="NCBI Taxonomy" id="4081"/>
</organismHost>
<organismHost>
    <name type="scientific">Solanum nigrum</name>
    <name type="common">Black nightshade</name>
    <dbReference type="NCBI Taxonomy" id="4112"/>
</organismHost>
<accession>P38608</accession>
<sequence>MPKRTGDILISTPVSKVRRKLNFDSPYTSRAAAPTVQGIKRRSWTYRPMYRKPRMYRMYRSPDVPFGCEGPCKVQSYEQRDDVKHTGVVRCVSDVTRGSGITHRVGKRFCIKSIYILGKIWMDENIKKQNHTNQVMFFLVRDRRPYGTSPMDFGQVFNMFDNEPSTATVKNDLRDRYQVMRKFHATVVGGPSGMKEQCLLKRFFKVNTHVVYNHQEQAKYENHTENALLLYMACTHASNPVYATLKIRIYFYDAVTN</sequence>
<proteinExistence type="inferred from homology"/>
<comment type="function">
    <text evidence="1">Encapsidates the viral genome into characteristic twinned ('geminate') particles. Binds the genomic viral ssDNA and shuttles it into and out of the cell nucleus. Plays a role in protection of the genome from degradation, virus acquisition and transmission by insect vectors, infectivity, and systemic movement. The CP of monopartite geminiviruses is absolutely essential for virus movement (By similarity).</text>
</comment>
<comment type="subunit">
    <text evidence="1">Homomultimer. Binds to single-stranded and double-stranded viral DNA. Interacts (via nuclear localization signals) with host importin alpha-1a (By similarity).</text>
</comment>
<comment type="subcellular location">
    <subcellularLocation>
        <location evidence="3">Virion</location>
    </subcellularLocation>
    <subcellularLocation>
        <location evidence="1">Host nucleus</location>
    </subcellularLocation>
    <text evidence="1">It is actively transported into the host cell nucleus. It may be exported out of the nucleus through a nuclear export signal for cell-to-cell movement and spread (By similarity).</text>
</comment>
<comment type="similarity">
    <text evidence="3">Belongs to the geminiviridae capsid protein family.</text>
</comment>
<gene>
    <name type="ORF">V1</name>
</gene>